<reference key="1">
    <citation type="journal article" date="2009" name="Environ. Microbiol.">
        <title>Contribution of mobile genetic elements to Desulfovibrio vulgaris genome plasticity.</title>
        <authorList>
            <person name="Walker C.B."/>
            <person name="Stolyar S."/>
            <person name="Chivian D."/>
            <person name="Pinel N."/>
            <person name="Gabster J.A."/>
            <person name="Dehal P.S."/>
            <person name="He Z."/>
            <person name="Yang Z.K."/>
            <person name="Yen H.C."/>
            <person name="Zhou J."/>
            <person name="Wall J.D."/>
            <person name="Hazen T.C."/>
            <person name="Arkin A.P."/>
            <person name="Stahl D.A."/>
        </authorList>
    </citation>
    <scope>NUCLEOTIDE SEQUENCE [LARGE SCALE GENOMIC DNA]</scope>
    <source>
        <strain>DP4</strain>
    </source>
</reference>
<feature type="chain" id="PRO_1000049669" description="Large ribosomal subunit protein bL19">
    <location>
        <begin position="1"/>
        <end position="115"/>
    </location>
</feature>
<gene>
    <name evidence="1" type="primary">rplS</name>
    <name type="ordered locus">Dvul_2146</name>
</gene>
<name>RL19_NITV4</name>
<proteinExistence type="inferred from homology"/>
<comment type="function">
    <text evidence="1">This protein is located at the 30S-50S ribosomal subunit interface and may play a role in the structure and function of the aminoacyl-tRNA binding site.</text>
</comment>
<comment type="similarity">
    <text evidence="1">Belongs to the bacterial ribosomal protein bL19 family.</text>
</comment>
<keyword id="KW-0687">Ribonucleoprotein</keyword>
<keyword id="KW-0689">Ribosomal protein</keyword>
<protein>
    <recommendedName>
        <fullName evidence="1">Large ribosomal subunit protein bL19</fullName>
    </recommendedName>
    <alternativeName>
        <fullName evidence="2">50S ribosomal protein L19</fullName>
    </alternativeName>
</protein>
<dbReference type="EMBL" id="CP000527">
    <property type="protein sequence ID" value="ABM29162.1"/>
    <property type="molecule type" value="Genomic_DNA"/>
</dbReference>
<dbReference type="RefSeq" id="WP_010938136.1">
    <property type="nucleotide sequence ID" value="NC_008751.1"/>
</dbReference>
<dbReference type="SMR" id="A1VFE6"/>
<dbReference type="KEGG" id="dvl:Dvul_2146"/>
<dbReference type="HOGENOM" id="CLU_103507_2_2_7"/>
<dbReference type="Proteomes" id="UP000009173">
    <property type="component" value="Chromosome"/>
</dbReference>
<dbReference type="GO" id="GO:0022625">
    <property type="term" value="C:cytosolic large ribosomal subunit"/>
    <property type="evidence" value="ECO:0007669"/>
    <property type="project" value="TreeGrafter"/>
</dbReference>
<dbReference type="GO" id="GO:0003735">
    <property type="term" value="F:structural constituent of ribosome"/>
    <property type="evidence" value="ECO:0007669"/>
    <property type="project" value="InterPro"/>
</dbReference>
<dbReference type="GO" id="GO:0006412">
    <property type="term" value="P:translation"/>
    <property type="evidence" value="ECO:0007669"/>
    <property type="project" value="UniProtKB-UniRule"/>
</dbReference>
<dbReference type="FunFam" id="2.30.30.790:FF:000001">
    <property type="entry name" value="50S ribosomal protein L19"/>
    <property type="match status" value="1"/>
</dbReference>
<dbReference type="Gene3D" id="2.30.30.790">
    <property type="match status" value="1"/>
</dbReference>
<dbReference type="HAMAP" id="MF_00402">
    <property type="entry name" value="Ribosomal_bL19"/>
    <property type="match status" value="1"/>
</dbReference>
<dbReference type="InterPro" id="IPR001857">
    <property type="entry name" value="Ribosomal_bL19"/>
</dbReference>
<dbReference type="InterPro" id="IPR018257">
    <property type="entry name" value="Ribosomal_bL19_CS"/>
</dbReference>
<dbReference type="InterPro" id="IPR038657">
    <property type="entry name" value="Ribosomal_bL19_sf"/>
</dbReference>
<dbReference type="InterPro" id="IPR008991">
    <property type="entry name" value="Translation_prot_SH3-like_sf"/>
</dbReference>
<dbReference type="NCBIfam" id="TIGR01024">
    <property type="entry name" value="rplS_bact"/>
    <property type="match status" value="1"/>
</dbReference>
<dbReference type="PANTHER" id="PTHR15680:SF9">
    <property type="entry name" value="LARGE RIBOSOMAL SUBUNIT PROTEIN BL19M"/>
    <property type="match status" value="1"/>
</dbReference>
<dbReference type="PANTHER" id="PTHR15680">
    <property type="entry name" value="RIBOSOMAL PROTEIN L19"/>
    <property type="match status" value="1"/>
</dbReference>
<dbReference type="Pfam" id="PF01245">
    <property type="entry name" value="Ribosomal_L19"/>
    <property type="match status" value="1"/>
</dbReference>
<dbReference type="PIRSF" id="PIRSF002191">
    <property type="entry name" value="Ribosomal_L19"/>
    <property type="match status" value="1"/>
</dbReference>
<dbReference type="PRINTS" id="PR00061">
    <property type="entry name" value="RIBOSOMALL19"/>
</dbReference>
<dbReference type="SUPFAM" id="SSF50104">
    <property type="entry name" value="Translation proteins SH3-like domain"/>
    <property type="match status" value="1"/>
</dbReference>
<dbReference type="PROSITE" id="PS01015">
    <property type="entry name" value="RIBOSOMAL_L19"/>
    <property type="match status" value="1"/>
</dbReference>
<evidence type="ECO:0000255" key="1">
    <source>
        <dbReference type="HAMAP-Rule" id="MF_00402"/>
    </source>
</evidence>
<evidence type="ECO:0000305" key="2"/>
<sequence>MDIMKKIELEHLRMDLPKFRSGDTVKVHLRIVEGEKERIQMFQGNVIRIHRGTTGGTFTVRKVSDGVGVERVFPLHSPFIDRVELITEGRVRRSRLYYLRDLRGKAARIKPKNRF</sequence>
<organism>
    <name type="scientific">Nitratidesulfovibrio vulgaris (strain DP4)</name>
    <name type="common">Desulfovibrio vulgaris</name>
    <dbReference type="NCBI Taxonomy" id="391774"/>
    <lineage>
        <taxon>Bacteria</taxon>
        <taxon>Pseudomonadati</taxon>
        <taxon>Thermodesulfobacteriota</taxon>
        <taxon>Desulfovibrionia</taxon>
        <taxon>Desulfovibrionales</taxon>
        <taxon>Desulfovibrionaceae</taxon>
        <taxon>Nitratidesulfovibrio</taxon>
    </lineage>
</organism>
<accession>A1VFE6</accession>